<accession>B5QVN4</accession>
<proteinExistence type="inferred from homology"/>
<comment type="function">
    <text evidence="1">Catalyzes the radical-mediated insertion of two sulfur atoms into the C-6 and C-8 positions of the octanoyl moiety bound to the lipoyl domains of lipoate-dependent enzymes, thereby converting the octanoylated domains into lipoylated derivatives.</text>
</comment>
<comment type="catalytic activity">
    <reaction evidence="1">
        <text>[[Fe-S] cluster scaffold protein carrying a second [4Fe-4S](2+) cluster] + N(6)-octanoyl-L-lysyl-[protein] + 2 oxidized [2Fe-2S]-[ferredoxin] + 2 S-adenosyl-L-methionine + 4 H(+) = [[Fe-S] cluster scaffold protein] + N(6)-[(R)-dihydrolipoyl]-L-lysyl-[protein] + 4 Fe(3+) + 2 hydrogen sulfide + 2 5'-deoxyadenosine + 2 L-methionine + 2 reduced [2Fe-2S]-[ferredoxin]</text>
        <dbReference type="Rhea" id="RHEA:16585"/>
        <dbReference type="Rhea" id="RHEA-COMP:9928"/>
        <dbReference type="Rhea" id="RHEA-COMP:10000"/>
        <dbReference type="Rhea" id="RHEA-COMP:10001"/>
        <dbReference type="Rhea" id="RHEA-COMP:10475"/>
        <dbReference type="Rhea" id="RHEA-COMP:14568"/>
        <dbReference type="Rhea" id="RHEA-COMP:14569"/>
        <dbReference type="ChEBI" id="CHEBI:15378"/>
        <dbReference type="ChEBI" id="CHEBI:17319"/>
        <dbReference type="ChEBI" id="CHEBI:29034"/>
        <dbReference type="ChEBI" id="CHEBI:29919"/>
        <dbReference type="ChEBI" id="CHEBI:33722"/>
        <dbReference type="ChEBI" id="CHEBI:33737"/>
        <dbReference type="ChEBI" id="CHEBI:33738"/>
        <dbReference type="ChEBI" id="CHEBI:57844"/>
        <dbReference type="ChEBI" id="CHEBI:59789"/>
        <dbReference type="ChEBI" id="CHEBI:78809"/>
        <dbReference type="ChEBI" id="CHEBI:83100"/>
        <dbReference type="EC" id="2.8.1.8"/>
    </reaction>
</comment>
<comment type="cofactor">
    <cofactor evidence="1">
        <name>[4Fe-4S] cluster</name>
        <dbReference type="ChEBI" id="CHEBI:49883"/>
    </cofactor>
    <text evidence="1">Binds 2 [4Fe-4S] clusters per subunit. One cluster is coordinated with 3 cysteines and an exchangeable S-adenosyl-L-methionine.</text>
</comment>
<comment type="pathway">
    <text evidence="1">Protein modification; protein lipoylation via endogenous pathway; protein N(6)-(lipoyl)lysine from octanoyl-[acyl-carrier-protein]: step 2/2.</text>
</comment>
<comment type="subcellular location">
    <subcellularLocation>
        <location evidence="1">Cytoplasm</location>
    </subcellularLocation>
</comment>
<comment type="similarity">
    <text evidence="1">Belongs to the radical SAM superfamily. Lipoyl synthase family.</text>
</comment>
<sequence length="321" mass="36042">MSKPIVMERGVKYRDADKMALIPVKNVVTERDALLRKPEWMKIKLPADSTRIQGIKAAMRKNGLHSVCEEASCPNLAECFNHGTATFMILGAICTRRCPFCDVAHGRPVAPDAEEPQKLAQTIADMALRYVVITSVDRDDLRDGGAQHFADCITAIRAKSPEIKIETLVPDFRGRMDRALDILNATPPDVFNHNLENVPRIYRQVRPGADYNWSLKLLERFKEAHPEIPTKSGLMVGLGETNAEIIEVMRDLRRHGVTMLTLGQYLQPSRHHLPVQRYVSPEEFDEMKAEALAMGFTHAACGPFVRSSYHADLQAKGMEVK</sequence>
<protein>
    <recommendedName>
        <fullName evidence="1">Lipoyl synthase</fullName>
        <ecNumber evidence="1">2.8.1.8</ecNumber>
    </recommendedName>
    <alternativeName>
        <fullName evidence="1">Lip-syn</fullName>
        <shortName evidence="1">LS</shortName>
    </alternativeName>
    <alternativeName>
        <fullName evidence="1">Lipoate synthase</fullName>
    </alternativeName>
    <alternativeName>
        <fullName evidence="1">Lipoic acid synthase</fullName>
    </alternativeName>
    <alternativeName>
        <fullName evidence="1">Sulfur insertion protein LipA</fullName>
    </alternativeName>
</protein>
<organism>
    <name type="scientific">Salmonella enteritidis PT4 (strain P125109)</name>
    <dbReference type="NCBI Taxonomy" id="550537"/>
    <lineage>
        <taxon>Bacteria</taxon>
        <taxon>Pseudomonadati</taxon>
        <taxon>Pseudomonadota</taxon>
        <taxon>Gammaproteobacteria</taxon>
        <taxon>Enterobacterales</taxon>
        <taxon>Enterobacteriaceae</taxon>
        <taxon>Salmonella</taxon>
    </lineage>
</organism>
<dbReference type="EC" id="2.8.1.8" evidence="1"/>
<dbReference type="EMBL" id="AM933172">
    <property type="protein sequence ID" value="CAR32190.1"/>
    <property type="molecule type" value="Genomic_DNA"/>
</dbReference>
<dbReference type="RefSeq" id="WP_000042640.1">
    <property type="nucleotide sequence ID" value="NC_011294.1"/>
</dbReference>
<dbReference type="SMR" id="B5QVN4"/>
<dbReference type="KEGG" id="set:SEN0602"/>
<dbReference type="HOGENOM" id="CLU_033144_2_1_6"/>
<dbReference type="UniPathway" id="UPA00538">
    <property type="reaction ID" value="UER00593"/>
</dbReference>
<dbReference type="Proteomes" id="UP000000613">
    <property type="component" value="Chromosome"/>
</dbReference>
<dbReference type="GO" id="GO:0005737">
    <property type="term" value="C:cytoplasm"/>
    <property type="evidence" value="ECO:0007669"/>
    <property type="project" value="UniProtKB-SubCell"/>
</dbReference>
<dbReference type="GO" id="GO:0051539">
    <property type="term" value="F:4 iron, 4 sulfur cluster binding"/>
    <property type="evidence" value="ECO:0007669"/>
    <property type="project" value="UniProtKB-UniRule"/>
</dbReference>
<dbReference type="GO" id="GO:0016992">
    <property type="term" value="F:lipoate synthase activity"/>
    <property type="evidence" value="ECO:0007669"/>
    <property type="project" value="UniProtKB-UniRule"/>
</dbReference>
<dbReference type="GO" id="GO:0046872">
    <property type="term" value="F:metal ion binding"/>
    <property type="evidence" value="ECO:0007669"/>
    <property type="project" value="UniProtKB-KW"/>
</dbReference>
<dbReference type="CDD" id="cd01335">
    <property type="entry name" value="Radical_SAM"/>
    <property type="match status" value="1"/>
</dbReference>
<dbReference type="FunFam" id="3.20.20.70:FF:000023">
    <property type="entry name" value="Lipoyl synthase"/>
    <property type="match status" value="1"/>
</dbReference>
<dbReference type="Gene3D" id="3.20.20.70">
    <property type="entry name" value="Aldolase class I"/>
    <property type="match status" value="1"/>
</dbReference>
<dbReference type="HAMAP" id="MF_00206">
    <property type="entry name" value="Lipoyl_synth"/>
    <property type="match status" value="1"/>
</dbReference>
<dbReference type="InterPro" id="IPR013785">
    <property type="entry name" value="Aldolase_TIM"/>
</dbReference>
<dbReference type="InterPro" id="IPR006638">
    <property type="entry name" value="Elp3/MiaA/NifB-like_rSAM"/>
</dbReference>
<dbReference type="InterPro" id="IPR031691">
    <property type="entry name" value="LIAS_N"/>
</dbReference>
<dbReference type="InterPro" id="IPR003698">
    <property type="entry name" value="Lipoyl_synth"/>
</dbReference>
<dbReference type="InterPro" id="IPR007197">
    <property type="entry name" value="rSAM"/>
</dbReference>
<dbReference type="NCBIfam" id="TIGR00510">
    <property type="entry name" value="lipA"/>
    <property type="match status" value="1"/>
</dbReference>
<dbReference type="NCBIfam" id="NF004019">
    <property type="entry name" value="PRK05481.1"/>
    <property type="match status" value="1"/>
</dbReference>
<dbReference type="NCBIfam" id="NF009544">
    <property type="entry name" value="PRK12928.1"/>
    <property type="match status" value="1"/>
</dbReference>
<dbReference type="PANTHER" id="PTHR10949">
    <property type="entry name" value="LIPOYL SYNTHASE"/>
    <property type="match status" value="1"/>
</dbReference>
<dbReference type="PANTHER" id="PTHR10949:SF0">
    <property type="entry name" value="LIPOYL SYNTHASE, MITOCHONDRIAL"/>
    <property type="match status" value="1"/>
</dbReference>
<dbReference type="Pfam" id="PF16881">
    <property type="entry name" value="LIAS_N"/>
    <property type="match status" value="1"/>
</dbReference>
<dbReference type="Pfam" id="PF04055">
    <property type="entry name" value="Radical_SAM"/>
    <property type="match status" value="1"/>
</dbReference>
<dbReference type="PIRSF" id="PIRSF005963">
    <property type="entry name" value="Lipoyl_synth"/>
    <property type="match status" value="1"/>
</dbReference>
<dbReference type="SFLD" id="SFLDF00271">
    <property type="entry name" value="lipoyl_synthase"/>
    <property type="match status" value="1"/>
</dbReference>
<dbReference type="SFLD" id="SFLDS00029">
    <property type="entry name" value="Radical_SAM"/>
    <property type="match status" value="1"/>
</dbReference>
<dbReference type="SMART" id="SM00729">
    <property type="entry name" value="Elp3"/>
    <property type="match status" value="1"/>
</dbReference>
<dbReference type="SUPFAM" id="SSF102114">
    <property type="entry name" value="Radical SAM enzymes"/>
    <property type="match status" value="1"/>
</dbReference>
<dbReference type="PROSITE" id="PS51918">
    <property type="entry name" value="RADICAL_SAM"/>
    <property type="match status" value="1"/>
</dbReference>
<gene>
    <name evidence="1" type="primary">lipA</name>
    <name type="ordered locus">SEN0602</name>
</gene>
<evidence type="ECO:0000255" key="1">
    <source>
        <dbReference type="HAMAP-Rule" id="MF_00206"/>
    </source>
</evidence>
<evidence type="ECO:0000255" key="2">
    <source>
        <dbReference type="PROSITE-ProRule" id="PRU01266"/>
    </source>
</evidence>
<reference key="1">
    <citation type="journal article" date="2008" name="Genome Res.">
        <title>Comparative genome analysis of Salmonella enteritidis PT4 and Salmonella gallinarum 287/91 provides insights into evolutionary and host adaptation pathways.</title>
        <authorList>
            <person name="Thomson N.R."/>
            <person name="Clayton D.J."/>
            <person name="Windhorst D."/>
            <person name="Vernikos G."/>
            <person name="Davidson S."/>
            <person name="Churcher C."/>
            <person name="Quail M.A."/>
            <person name="Stevens M."/>
            <person name="Jones M.A."/>
            <person name="Watson M."/>
            <person name="Barron A."/>
            <person name="Layton A."/>
            <person name="Pickard D."/>
            <person name="Kingsley R.A."/>
            <person name="Bignell A."/>
            <person name="Clark L."/>
            <person name="Harris B."/>
            <person name="Ormond D."/>
            <person name="Abdellah Z."/>
            <person name="Brooks K."/>
            <person name="Cherevach I."/>
            <person name="Chillingworth T."/>
            <person name="Woodward J."/>
            <person name="Norberczak H."/>
            <person name="Lord A."/>
            <person name="Arrowsmith C."/>
            <person name="Jagels K."/>
            <person name="Moule S."/>
            <person name="Mungall K."/>
            <person name="Saunders M."/>
            <person name="Whitehead S."/>
            <person name="Chabalgoity J.A."/>
            <person name="Maskell D."/>
            <person name="Humphreys T."/>
            <person name="Roberts M."/>
            <person name="Barrow P.A."/>
            <person name="Dougan G."/>
            <person name="Parkhill J."/>
        </authorList>
    </citation>
    <scope>NUCLEOTIDE SEQUENCE [LARGE SCALE GENOMIC DNA]</scope>
    <source>
        <strain>P125109</strain>
    </source>
</reference>
<feature type="chain" id="PRO_1000099629" description="Lipoyl synthase">
    <location>
        <begin position="1"/>
        <end position="321"/>
    </location>
</feature>
<feature type="domain" description="Radical SAM core" evidence="2">
    <location>
        <begin position="80"/>
        <end position="297"/>
    </location>
</feature>
<feature type="binding site" evidence="1">
    <location>
        <position position="68"/>
    </location>
    <ligand>
        <name>[4Fe-4S] cluster</name>
        <dbReference type="ChEBI" id="CHEBI:49883"/>
        <label>1</label>
    </ligand>
</feature>
<feature type="binding site" evidence="1">
    <location>
        <position position="73"/>
    </location>
    <ligand>
        <name>[4Fe-4S] cluster</name>
        <dbReference type="ChEBI" id="CHEBI:49883"/>
        <label>1</label>
    </ligand>
</feature>
<feature type="binding site" evidence="1">
    <location>
        <position position="79"/>
    </location>
    <ligand>
        <name>[4Fe-4S] cluster</name>
        <dbReference type="ChEBI" id="CHEBI:49883"/>
        <label>1</label>
    </ligand>
</feature>
<feature type="binding site" evidence="1">
    <location>
        <position position="94"/>
    </location>
    <ligand>
        <name>[4Fe-4S] cluster</name>
        <dbReference type="ChEBI" id="CHEBI:49883"/>
        <label>2</label>
        <note>4Fe-4S-S-AdoMet</note>
    </ligand>
</feature>
<feature type="binding site" evidence="1">
    <location>
        <position position="98"/>
    </location>
    <ligand>
        <name>[4Fe-4S] cluster</name>
        <dbReference type="ChEBI" id="CHEBI:49883"/>
        <label>2</label>
        <note>4Fe-4S-S-AdoMet</note>
    </ligand>
</feature>
<feature type="binding site" evidence="1">
    <location>
        <position position="101"/>
    </location>
    <ligand>
        <name>[4Fe-4S] cluster</name>
        <dbReference type="ChEBI" id="CHEBI:49883"/>
        <label>2</label>
        <note>4Fe-4S-S-AdoMet</note>
    </ligand>
</feature>
<feature type="binding site" evidence="1">
    <location>
        <position position="308"/>
    </location>
    <ligand>
        <name>[4Fe-4S] cluster</name>
        <dbReference type="ChEBI" id="CHEBI:49883"/>
        <label>1</label>
    </ligand>
</feature>
<keyword id="KW-0004">4Fe-4S</keyword>
<keyword id="KW-0963">Cytoplasm</keyword>
<keyword id="KW-0408">Iron</keyword>
<keyword id="KW-0411">Iron-sulfur</keyword>
<keyword id="KW-0479">Metal-binding</keyword>
<keyword id="KW-0949">S-adenosyl-L-methionine</keyword>
<keyword id="KW-0808">Transferase</keyword>
<name>LIPA_SALEP</name>